<evidence type="ECO:0000255" key="1">
    <source>
        <dbReference type="HAMAP-Rule" id="MF_02068"/>
    </source>
</evidence>
<gene>
    <name evidence="1" type="primary">tarI</name>
    <name type="ordered locus">SP70585_1334</name>
</gene>
<keyword id="KW-0961">Cell wall biogenesis/degradation</keyword>
<keyword id="KW-0548">Nucleotidyltransferase</keyword>
<keyword id="KW-0777">Teichoic acid biosynthesis</keyword>
<keyword id="KW-0808">Transferase</keyword>
<proteinExistence type="inferred from homology"/>
<sequence>MIYAGILAGGTGTRMGISNLPKQFLELGDRPILIHTIEKFVLEPSIEKIVVGVHGDWVSHAEDLVDKYLPLYKERIIITKGGADRNTSIKKIIEAIDAYRPLTPEDIVVTHDSVRPFITLRMIQDNIQLAQNHDAVDTVVEAVDTIVESTNGQFITDIPNRAHLYQGQTPQTFRCKDFMDLYGSLSDEEKEILTDACKIFVIKGKDVALAKGEYSNLKITTVTDLKIAKSMIEKD</sequence>
<name>TARI_STRP7</name>
<organism>
    <name type="scientific">Streptococcus pneumoniae (strain 70585)</name>
    <dbReference type="NCBI Taxonomy" id="488221"/>
    <lineage>
        <taxon>Bacteria</taxon>
        <taxon>Bacillati</taxon>
        <taxon>Bacillota</taxon>
        <taxon>Bacilli</taxon>
        <taxon>Lactobacillales</taxon>
        <taxon>Streptococcaceae</taxon>
        <taxon>Streptococcus</taxon>
    </lineage>
</organism>
<accession>C1C7P9</accession>
<comment type="function">
    <text evidence="1">Catalyzes the transfer of the cytidylyl group of CTP to D-ribitol 5-phosphate.</text>
</comment>
<comment type="catalytic activity">
    <reaction evidence="1">
        <text>D-ribitol 5-phosphate + CTP + H(+) = CDP-L-ribitol + diphosphate</text>
        <dbReference type="Rhea" id="RHEA:12456"/>
        <dbReference type="ChEBI" id="CHEBI:15378"/>
        <dbReference type="ChEBI" id="CHEBI:33019"/>
        <dbReference type="ChEBI" id="CHEBI:37563"/>
        <dbReference type="ChEBI" id="CHEBI:57608"/>
        <dbReference type="ChEBI" id="CHEBI:57695"/>
        <dbReference type="EC" id="2.7.7.40"/>
    </reaction>
</comment>
<comment type="pathway">
    <text evidence="1">Cell wall biogenesis; poly(ribitol phosphate) teichoic acid biosynthesis.</text>
</comment>
<comment type="similarity">
    <text evidence="1">Belongs to the IspD/TarI cytidylyltransferase family. TarI subfamily.</text>
</comment>
<dbReference type="EC" id="2.7.7.40" evidence="1"/>
<dbReference type="EMBL" id="CP000918">
    <property type="protein sequence ID" value="ACO16456.1"/>
    <property type="molecule type" value="Genomic_DNA"/>
</dbReference>
<dbReference type="RefSeq" id="WP_000638502.1">
    <property type="nucleotide sequence ID" value="NC_012468.1"/>
</dbReference>
<dbReference type="SMR" id="C1C7P9"/>
<dbReference type="KEGG" id="snm:SP70585_1334"/>
<dbReference type="HOGENOM" id="CLU_061281_2_3_9"/>
<dbReference type="UniPathway" id="UPA00790"/>
<dbReference type="Proteomes" id="UP000002211">
    <property type="component" value="Chromosome"/>
</dbReference>
<dbReference type="GO" id="GO:0050518">
    <property type="term" value="F:2-C-methyl-D-erythritol 4-phosphate cytidylyltransferase activity"/>
    <property type="evidence" value="ECO:0007669"/>
    <property type="project" value="TreeGrafter"/>
</dbReference>
<dbReference type="GO" id="GO:0047349">
    <property type="term" value="F:D-ribitol-5-phosphate cytidylyltransferase activity"/>
    <property type="evidence" value="ECO:0007669"/>
    <property type="project" value="UniProtKB-UniRule"/>
</dbReference>
<dbReference type="GO" id="GO:0071555">
    <property type="term" value="P:cell wall organization"/>
    <property type="evidence" value="ECO:0007669"/>
    <property type="project" value="UniProtKB-KW"/>
</dbReference>
<dbReference type="GO" id="GO:0008299">
    <property type="term" value="P:isoprenoid biosynthetic process"/>
    <property type="evidence" value="ECO:0007669"/>
    <property type="project" value="InterPro"/>
</dbReference>
<dbReference type="GO" id="GO:1902012">
    <property type="term" value="P:poly(ribitol phosphate) teichoic acid biosynthetic process"/>
    <property type="evidence" value="ECO:0007669"/>
    <property type="project" value="UniProtKB-UniRule"/>
</dbReference>
<dbReference type="CDD" id="cd02516">
    <property type="entry name" value="CDP-ME_synthetase"/>
    <property type="match status" value="1"/>
</dbReference>
<dbReference type="FunFam" id="3.90.550.10:FF:000003">
    <property type="entry name" value="2-C-methyl-D-erythritol 4-phosphate cytidylyltransferase"/>
    <property type="match status" value="1"/>
</dbReference>
<dbReference type="Gene3D" id="3.90.550.10">
    <property type="entry name" value="Spore Coat Polysaccharide Biosynthesis Protein SpsA, Chain A"/>
    <property type="match status" value="1"/>
</dbReference>
<dbReference type="HAMAP" id="MF_02068">
    <property type="entry name" value="TarI"/>
    <property type="match status" value="1"/>
</dbReference>
<dbReference type="InterPro" id="IPR034683">
    <property type="entry name" value="IspD/TarI"/>
</dbReference>
<dbReference type="InterPro" id="IPR050088">
    <property type="entry name" value="IspD/TarI_cytidylyltransf_bact"/>
</dbReference>
<dbReference type="InterPro" id="IPR018294">
    <property type="entry name" value="ISPD_synthase_CS"/>
</dbReference>
<dbReference type="InterPro" id="IPR029044">
    <property type="entry name" value="Nucleotide-diphossugar_trans"/>
</dbReference>
<dbReference type="InterPro" id="IPR034709">
    <property type="entry name" value="TarI"/>
</dbReference>
<dbReference type="NCBIfam" id="NF001183">
    <property type="entry name" value="PRK00155.1-3"/>
    <property type="match status" value="1"/>
</dbReference>
<dbReference type="PANTHER" id="PTHR32125">
    <property type="entry name" value="2-C-METHYL-D-ERYTHRITOL 4-PHOSPHATE CYTIDYLYLTRANSFERASE, CHLOROPLASTIC"/>
    <property type="match status" value="1"/>
</dbReference>
<dbReference type="PANTHER" id="PTHR32125:SF8">
    <property type="entry name" value="RIBITOL-5-PHOSPHATE CYTIDYLYLTRANSFERASE"/>
    <property type="match status" value="1"/>
</dbReference>
<dbReference type="Pfam" id="PF01128">
    <property type="entry name" value="IspD"/>
    <property type="match status" value="1"/>
</dbReference>
<dbReference type="SUPFAM" id="SSF53448">
    <property type="entry name" value="Nucleotide-diphospho-sugar transferases"/>
    <property type="match status" value="1"/>
</dbReference>
<dbReference type="PROSITE" id="PS01295">
    <property type="entry name" value="ISPD"/>
    <property type="match status" value="1"/>
</dbReference>
<feature type="chain" id="PRO_1000191071" description="Ribitol-5-phosphate cytidylyltransferase">
    <location>
        <begin position="1"/>
        <end position="235"/>
    </location>
</feature>
<feature type="binding site" evidence="1">
    <location>
        <begin position="7"/>
        <end position="10"/>
    </location>
    <ligand>
        <name>CTP</name>
        <dbReference type="ChEBI" id="CHEBI:37563"/>
    </ligand>
</feature>
<feature type="binding site" evidence="1">
    <location>
        <begin position="82"/>
        <end position="88"/>
    </location>
    <ligand>
        <name>CTP</name>
        <dbReference type="ChEBI" id="CHEBI:37563"/>
    </ligand>
</feature>
<feature type="binding site" evidence="1">
    <location>
        <position position="113"/>
    </location>
    <ligand>
        <name>CTP</name>
        <dbReference type="ChEBI" id="CHEBI:37563"/>
    </ligand>
</feature>
<feature type="site" description="Transition state stabilizer" evidence="1">
    <location>
        <position position="14"/>
    </location>
</feature>
<feature type="site" description="Transition state stabilizer" evidence="1">
    <location>
        <position position="22"/>
    </location>
</feature>
<feature type="site" description="Positions ribitol 5-phosphate for the nucleophilic attack" evidence="1">
    <location>
        <position position="161"/>
    </location>
</feature>
<feature type="site" description="Positions ribitol 5-phosphate for the nucleophilic attack" evidence="1">
    <location>
        <position position="218"/>
    </location>
</feature>
<reference key="1">
    <citation type="journal article" date="2010" name="Genome Biol.">
        <title>Structure and dynamics of the pan-genome of Streptococcus pneumoniae and closely related species.</title>
        <authorList>
            <person name="Donati C."/>
            <person name="Hiller N.L."/>
            <person name="Tettelin H."/>
            <person name="Muzzi A."/>
            <person name="Croucher N.J."/>
            <person name="Angiuoli S.V."/>
            <person name="Oggioni M."/>
            <person name="Dunning Hotopp J.C."/>
            <person name="Hu F.Z."/>
            <person name="Riley D.R."/>
            <person name="Covacci A."/>
            <person name="Mitchell T.J."/>
            <person name="Bentley S.D."/>
            <person name="Kilian M."/>
            <person name="Ehrlich G.D."/>
            <person name="Rappuoli R."/>
            <person name="Moxon E.R."/>
            <person name="Masignani V."/>
        </authorList>
    </citation>
    <scope>NUCLEOTIDE SEQUENCE [LARGE SCALE GENOMIC DNA]</scope>
    <source>
        <strain>70585</strain>
    </source>
</reference>
<protein>
    <recommendedName>
        <fullName evidence="1">Ribitol-5-phosphate cytidylyltransferase</fullName>
        <ecNumber evidence="1">2.7.7.40</ecNumber>
    </recommendedName>
</protein>